<protein>
    <recommendedName>
        <fullName>Protein phosphatase 1 regulatory subunit 14B</fullName>
    </recommendedName>
    <alternativeName>
        <fullName>Phospholipase C-beta-3 neighbouring gene protein</fullName>
    </alternativeName>
</protein>
<reference key="1">
    <citation type="submission" date="2003-08" db="EMBL/GenBank/DDBJ databases">
        <title>Cloning of human full-length CDSs in BD Creator(TM) system donor vector.</title>
        <authorList>
            <person name="Kalnine N."/>
            <person name="Chen X."/>
            <person name="Rolfs A."/>
            <person name="Halleck A."/>
            <person name="Hines L."/>
            <person name="Eisenstein S."/>
            <person name="Koundinya M."/>
            <person name="Raphael J."/>
            <person name="Moreira D."/>
            <person name="Kelley T."/>
            <person name="LaBaer J."/>
            <person name="Lin Y."/>
            <person name="Phelan M."/>
            <person name="Farmer A."/>
        </authorList>
    </citation>
    <scope>NUCLEOTIDE SEQUENCE [LARGE SCALE MRNA]</scope>
</reference>
<reference key="2">
    <citation type="journal article" date="2004" name="Genome Res.">
        <title>The status, quality, and expansion of the NIH full-length cDNA project: the Mammalian Gene Collection (MGC).</title>
        <authorList>
            <consortium name="The MGC Project Team"/>
        </authorList>
    </citation>
    <scope>NUCLEOTIDE SEQUENCE [LARGE SCALE MRNA]</scope>
    <source>
        <tissue>Skin</tissue>
    </source>
</reference>
<reference key="3">
    <citation type="journal article" date="1996" name="Genomics">
        <title>Isolation and characterization of a novel gene close to the human phosphoinositide-specific phospholipase C beta 3 gene on chromosomal region 11q13.</title>
        <authorList>
            <person name="Lagercrantz J."/>
            <person name="Carson E."/>
            <person name="Larsson C."/>
            <person name="Nordenskjoeld M."/>
            <person name="Weber G."/>
        </authorList>
    </citation>
    <scope>TISSUE SPECIFICITY</scope>
</reference>
<reference key="4">
    <citation type="journal article" date="2006" name="Nat. Biotechnol.">
        <title>A probability-based approach for high-throughput protein phosphorylation analysis and site localization.</title>
        <authorList>
            <person name="Beausoleil S.A."/>
            <person name="Villen J."/>
            <person name="Gerber S.A."/>
            <person name="Rush J."/>
            <person name="Gygi S.P."/>
        </authorList>
    </citation>
    <scope>PHOSPHORYLATION [LARGE SCALE ANALYSIS] AT SER-32</scope>
    <scope>IDENTIFICATION BY MASS SPECTROMETRY [LARGE SCALE ANALYSIS]</scope>
    <source>
        <tissue>Cervix carcinoma</tissue>
    </source>
</reference>
<reference key="5">
    <citation type="journal article" date="2008" name="Proc. Natl. Acad. Sci. U.S.A.">
        <title>A quantitative atlas of mitotic phosphorylation.</title>
        <authorList>
            <person name="Dephoure N."/>
            <person name="Zhou C."/>
            <person name="Villen J."/>
            <person name="Beausoleil S.A."/>
            <person name="Bakalarski C.E."/>
            <person name="Elledge S.J."/>
            <person name="Gygi S.P."/>
        </authorList>
    </citation>
    <scope>PHOSPHORYLATION [LARGE SCALE ANALYSIS] AT SER-32</scope>
    <scope>IDENTIFICATION BY MASS SPECTROMETRY [LARGE SCALE ANALYSIS]</scope>
    <source>
        <tissue>Cervix carcinoma</tissue>
    </source>
</reference>
<reference key="6">
    <citation type="journal article" date="2009" name="Anal. Chem.">
        <title>Lys-N and trypsin cover complementary parts of the phosphoproteome in a refined SCX-based approach.</title>
        <authorList>
            <person name="Gauci S."/>
            <person name="Helbig A.O."/>
            <person name="Slijper M."/>
            <person name="Krijgsveld J."/>
            <person name="Heck A.J."/>
            <person name="Mohammed S."/>
        </authorList>
    </citation>
    <scope>ACETYLATION [LARGE SCALE ANALYSIS] AT ALA-2</scope>
    <scope>CLEAVAGE OF INITIATOR METHIONINE [LARGE SCALE ANALYSIS]</scope>
    <scope>IDENTIFICATION BY MASS SPECTROMETRY [LARGE SCALE ANALYSIS]</scope>
</reference>
<reference key="7">
    <citation type="journal article" date="2009" name="Sci. Signal.">
        <title>Quantitative phosphoproteomic analysis of T cell receptor signaling reveals system-wide modulation of protein-protein interactions.</title>
        <authorList>
            <person name="Mayya V."/>
            <person name="Lundgren D.H."/>
            <person name="Hwang S.-I."/>
            <person name="Rezaul K."/>
            <person name="Wu L."/>
            <person name="Eng J.K."/>
            <person name="Rodionov V."/>
            <person name="Han D.K."/>
        </authorList>
    </citation>
    <scope>IDENTIFICATION BY MASS SPECTROMETRY [LARGE SCALE ANALYSIS]</scope>
    <source>
        <tissue>Leukemic T-cell</tissue>
    </source>
</reference>
<reference key="8">
    <citation type="journal article" date="2010" name="Sci. Signal.">
        <title>Quantitative phosphoproteomics reveals widespread full phosphorylation site occupancy during mitosis.</title>
        <authorList>
            <person name="Olsen J.V."/>
            <person name="Vermeulen M."/>
            <person name="Santamaria A."/>
            <person name="Kumar C."/>
            <person name="Miller M.L."/>
            <person name="Jensen L.J."/>
            <person name="Gnad F."/>
            <person name="Cox J."/>
            <person name="Jensen T.S."/>
            <person name="Nigg E.A."/>
            <person name="Brunak S."/>
            <person name="Mann M."/>
        </authorList>
    </citation>
    <scope>PHOSPHORYLATION [LARGE SCALE ANALYSIS] AT SER-32</scope>
    <scope>IDENTIFICATION BY MASS SPECTROMETRY [LARGE SCALE ANALYSIS]</scope>
    <source>
        <tissue>Cervix carcinoma</tissue>
    </source>
</reference>
<reference key="9">
    <citation type="journal article" date="2011" name="BMC Syst. Biol.">
        <title>Initial characterization of the human central proteome.</title>
        <authorList>
            <person name="Burkard T.R."/>
            <person name="Planyavsky M."/>
            <person name="Kaupe I."/>
            <person name="Breitwieser F.P."/>
            <person name="Buerckstuemmer T."/>
            <person name="Bennett K.L."/>
            <person name="Superti-Furga G."/>
            <person name="Colinge J."/>
        </authorList>
    </citation>
    <scope>IDENTIFICATION BY MASS SPECTROMETRY [LARGE SCALE ANALYSIS]</scope>
</reference>
<reference key="10">
    <citation type="journal article" date="2012" name="Mol. Cell. Proteomics">
        <title>Comparative large-scale characterisation of plant vs. mammal proteins reveals similar and idiosyncratic N-alpha acetylation features.</title>
        <authorList>
            <person name="Bienvenut W.V."/>
            <person name="Sumpton D."/>
            <person name="Martinez A."/>
            <person name="Lilla S."/>
            <person name="Espagne C."/>
            <person name="Meinnel T."/>
            <person name="Giglione C."/>
        </authorList>
    </citation>
    <scope>ACETYLATION [LARGE SCALE ANALYSIS] AT ALA-2</scope>
    <scope>CLEAVAGE OF INITIATOR METHIONINE [LARGE SCALE ANALYSIS]</scope>
    <scope>IDENTIFICATION BY MASS SPECTROMETRY [LARGE SCALE ANALYSIS]</scope>
</reference>
<reference key="11">
    <citation type="journal article" date="2012" name="Proc. Natl. Acad. Sci. U.S.A.">
        <title>N-terminal acetylome analyses and functional insights of the N-terminal acetyltransferase NatB.</title>
        <authorList>
            <person name="Van Damme P."/>
            <person name="Lasa M."/>
            <person name="Polevoda B."/>
            <person name="Gazquez C."/>
            <person name="Elosegui-Artola A."/>
            <person name="Kim D.S."/>
            <person name="De Juan-Pardo E."/>
            <person name="Demeyer K."/>
            <person name="Hole K."/>
            <person name="Larrea E."/>
            <person name="Timmerman E."/>
            <person name="Prieto J."/>
            <person name="Arnesen T."/>
            <person name="Sherman F."/>
            <person name="Gevaert K."/>
            <person name="Aldabe R."/>
        </authorList>
    </citation>
    <scope>ACETYLATION [LARGE SCALE ANALYSIS] AT ALA-2</scope>
    <scope>CLEAVAGE OF INITIATOR METHIONINE [LARGE SCALE ANALYSIS]</scope>
    <scope>IDENTIFICATION BY MASS SPECTROMETRY [LARGE SCALE ANALYSIS]</scope>
</reference>
<reference key="12">
    <citation type="journal article" date="2013" name="J. Proteome Res.">
        <title>Toward a comprehensive characterization of a human cancer cell phosphoproteome.</title>
        <authorList>
            <person name="Zhou H."/>
            <person name="Di Palma S."/>
            <person name="Preisinger C."/>
            <person name="Peng M."/>
            <person name="Polat A.N."/>
            <person name="Heck A.J."/>
            <person name="Mohammed S."/>
        </authorList>
    </citation>
    <scope>PHOSPHORYLATION [LARGE SCALE ANALYSIS] AT SER-21; TYR-29 AND SER-32</scope>
    <scope>IDENTIFICATION BY MASS SPECTROMETRY [LARGE SCALE ANALYSIS]</scope>
    <source>
        <tissue>Cervix carcinoma</tissue>
        <tissue>Erythroleukemia</tissue>
    </source>
</reference>
<comment type="function">
    <text evidence="1">Inhibitor of PPP1CA. Has over 50-fold higher inhibitory activity when phosphorylated (By similarity).</text>
</comment>
<comment type="interaction">
    <interactant intactId="EBI-7009703">
        <id>Q96C90</id>
    </interactant>
    <interactant intactId="EBI-1384350">
        <id>P53671</id>
        <label>LIMK2</label>
    </interactant>
    <organismsDiffer>false</organismsDiffer>
    <experiments>2</experiments>
</comment>
<comment type="subcellular location">
    <subcellularLocation>
        <location evidence="6">Cytoplasm</location>
    </subcellularLocation>
</comment>
<comment type="tissue specificity">
    <text evidence="5">Ubiquitous. Expressed at low levels.</text>
</comment>
<comment type="PTM">
    <text evidence="1">Phosphorylated primarily on Thr-57 by PKC (in vitro). An unknown Ser is also phosphorylated by PKC (in vitro) (By similarity).</text>
</comment>
<comment type="similarity">
    <text evidence="6">Belongs to the PP1 inhibitor family.</text>
</comment>
<proteinExistence type="evidence at protein level"/>
<feature type="initiator methionine" description="Removed" evidence="9 11 12">
    <location>
        <position position="1"/>
    </location>
</feature>
<feature type="chain" id="PRO_0000071490" description="Protein phosphatase 1 regulatory subunit 14B">
    <location>
        <begin position="2"/>
        <end position="147"/>
    </location>
</feature>
<feature type="region of interest" description="Disordered" evidence="4">
    <location>
        <begin position="1"/>
        <end position="55"/>
    </location>
</feature>
<feature type="coiled-coil region" evidence="3">
    <location>
        <begin position="61"/>
        <end position="103"/>
    </location>
</feature>
<feature type="modified residue" description="N-acetylalanine" evidence="9 11 12">
    <location>
        <position position="2"/>
    </location>
</feature>
<feature type="modified residue" description="Phosphoserine" evidence="13">
    <location>
        <position position="21"/>
    </location>
</feature>
<feature type="modified residue" description="Phosphotyrosine" evidence="13">
    <location>
        <position position="29"/>
    </location>
</feature>
<feature type="modified residue" description="Phosphoserine" evidence="7 8 10 13">
    <location>
        <position position="32"/>
    </location>
</feature>
<feature type="modified residue" description="Phosphothreonine" evidence="2">
    <location>
        <position position="57"/>
    </location>
</feature>
<dbReference type="EMBL" id="BT009914">
    <property type="protein sequence ID" value="AAP88916.1"/>
    <property type="molecule type" value="mRNA"/>
</dbReference>
<dbReference type="EMBL" id="BC014522">
    <property type="protein sequence ID" value="AAH14522.3"/>
    <property type="molecule type" value="mRNA"/>
</dbReference>
<dbReference type="EMBL" id="BC094817">
    <property type="protein sequence ID" value="AAH94817.1"/>
    <property type="molecule type" value="mRNA"/>
</dbReference>
<dbReference type="CCDS" id="CCDS31596.1"/>
<dbReference type="RefSeq" id="NP_619634.1">
    <property type="nucleotide sequence ID" value="NM_138689.3"/>
</dbReference>
<dbReference type="BioGRID" id="117696">
    <property type="interactions" value="30"/>
</dbReference>
<dbReference type="FunCoup" id="Q96C90">
    <property type="interactions" value="96"/>
</dbReference>
<dbReference type="IntAct" id="Q96C90">
    <property type="interactions" value="5"/>
</dbReference>
<dbReference type="MINT" id="Q96C90"/>
<dbReference type="STRING" id="9606.ENSP00000310117"/>
<dbReference type="GlyGen" id="Q96C90">
    <property type="glycosylation" value="1 site, 1 O-linked glycan (1 site)"/>
</dbReference>
<dbReference type="iPTMnet" id="Q96C90"/>
<dbReference type="PhosphoSitePlus" id="Q96C90"/>
<dbReference type="BioMuta" id="PPP1R14B"/>
<dbReference type="DMDM" id="55583975"/>
<dbReference type="jPOST" id="Q96C90"/>
<dbReference type="MassIVE" id="Q96C90"/>
<dbReference type="PaxDb" id="9606-ENSP00000310117"/>
<dbReference type="PeptideAtlas" id="Q96C90"/>
<dbReference type="ProteomicsDB" id="76165"/>
<dbReference type="Pumba" id="Q96C90"/>
<dbReference type="TopDownProteomics" id="Q96C90"/>
<dbReference type="Antibodypedia" id="43962">
    <property type="antibodies" value="62 antibodies from 21 providers"/>
</dbReference>
<dbReference type="DNASU" id="26472"/>
<dbReference type="Ensembl" id="ENST00000309318.8">
    <property type="protein sequence ID" value="ENSP00000310117.3"/>
    <property type="gene ID" value="ENSG00000173457.11"/>
</dbReference>
<dbReference type="GeneID" id="26472"/>
<dbReference type="KEGG" id="hsa:26472"/>
<dbReference type="MANE-Select" id="ENST00000309318.8">
    <property type="protein sequence ID" value="ENSP00000310117.3"/>
    <property type="RefSeq nucleotide sequence ID" value="NM_138689.3"/>
    <property type="RefSeq protein sequence ID" value="NP_619634.1"/>
</dbReference>
<dbReference type="UCSC" id="uc001nza.4">
    <property type="organism name" value="human"/>
</dbReference>
<dbReference type="AGR" id="HGNC:9057"/>
<dbReference type="CTD" id="26472"/>
<dbReference type="DisGeNET" id="26472"/>
<dbReference type="GeneCards" id="PPP1R14B"/>
<dbReference type="HGNC" id="HGNC:9057">
    <property type="gene designation" value="PPP1R14B"/>
</dbReference>
<dbReference type="HPA" id="ENSG00000173457">
    <property type="expression patterns" value="Low tissue specificity"/>
</dbReference>
<dbReference type="MIM" id="601140">
    <property type="type" value="gene"/>
</dbReference>
<dbReference type="neXtProt" id="NX_Q96C90"/>
<dbReference type="OpenTargets" id="ENSG00000173457"/>
<dbReference type="PharmGKB" id="PA33624"/>
<dbReference type="VEuPathDB" id="HostDB:ENSG00000173457"/>
<dbReference type="eggNOG" id="KOG0824">
    <property type="taxonomic scope" value="Eukaryota"/>
</dbReference>
<dbReference type="GeneTree" id="ENSGT00950000182985"/>
<dbReference type="HOGENOM" id="CLU_114155_1_0_1"/>
<dbReference type="InParanoid" id="Q96C90"/>
<dbReference type="OMA" id="RLNIEEW"/>
<dbReference type="OrthoDB" id="8193882at2759"/>
<dbReference type="PAN-GO" id="Q96C90">
    <property type="GO annotations" value="2 GO annotations based on evolutionary models"/>
</dbReference>
<dbReference type="PhylomeDB" id="Q96C90"/>
<dbReference type="TreeFam" id="TF105546"/>
<dbReference type="PathwayCommons" id="Q96C90"/>
<dbReference type="SignaLink" id="Q96C90"/>
<dbReference type="SIGNOR" id="Q96C90"/>
<dbReference type="BioGRID-ORCS" id="26472">
    <property type="hits" value="122 hits in 1093 CRISPR screens"/>
</dbReference>
<dbReference type="ChiTaRS" id="PPP1R14B">
    <property type="organism name" value="human"/>
</dbReference>
<dbReference type="GeneWiki" id="PPP1R14B"/>
<dbReference type="GenomeRNAi" id="26472"/>
<dbReference type="Pharos" id="Q96C90">
    <property type="development level" value="Tbio"/>
</dbReference>
<dbReference type="PRO" id="PR:Q96C90"/>
<dbReference type="Proteomes" id="UP000005640">
    <property type="component" value="Chromosome 11"/>
</dbReference>
<dbReference type="RNAct" id="Q96C90">
    <property type="molecule type" value="protein"/>
</dbReference>
<dbReference type="Bgee" id="ENSG00000173457">
    <property type="expression patterns" value="Expressed in cortical plate and 95 other cell types or tissues"/>
</dbReference>
<dbReference type="ExpressionAtlas" id="Q96C90">
    <property type="expression patterns" value="baseline and differential"/>
</dbReference>
<dbReference type="GO" id="GO:0005737">
    <property type="term" value="C:cytoplasm"/>
    <property type="evidence" value="ECO:0007669"/>
    <property type="project" value="UniProtKB-SubCell"/>
</dbReference>
<dbReference type="GO" id="GO:0004865">
    <property type="term" value="F:protein serine/threonine phosphatase inhibitor activity"/>
    <property type="evidence" value="ECO:0000318"/>
    <property type="project" value="GO_Central"/>
</dbReference>
<dbReference type="GO" id="GO:0045087">
    <property type="term" value="P:innate immune response"/>
    <property type="evidence" value="ECO:0000318"/>
    <property type="project" value="GO_Central"/>
</dbReference>
<dbReference type="FunFam" id="1.10.150.220:FF:000001">
    <property type="entry name" value="Phosphatase 1, regulatory (Inhibitor) subunit 14C"/>
    <property type="match status" value="1"/>
</dbReference>
<dbReference type="Gene3D" id="1.10.150.220">
    <property type="entry name" value="CPI-17"/>
    <property type="match status" value="1"/>
</dbReference>
<dbReference type="InterPro" id="IPR008025">
    <property type="entry name" value="CPI-17"/>
</dbReference>
<dbReference type="InterPro" id="IPR036658">
    <property type="entry name" value="CPI-17_sf"/>
</dbReference>
<dbReference type="PANTHER" id="PTHR16188">
    <property type="entry name" value="PROTEIN PHOSPHATASE 1 INHIBITOR POTENTIATED BY PROTEIN KINASE C"/>
    <property type="match status" value="1"/>
</dbReference>
<dbReference type="PANTHER" id="PTHR16188:SF5">
    <property type="entry name" value="PROTEIN PHOSPHATASE 1 REGULATORY SUBUNIT 14B"/>
    <property type="match status" value="1"/>
</dbReference>
<dbReference type="Pfam" id="PF05361">
    <property type="entry name" value="PP1_inhibitor"/>
    <property type="match status" value="1"/>
</dbReference>
<dbReference type="SUPFAM" id="SSF81790">
    <property type="entry name" value="Myosin phosphatase inhibitor 17kDa protein, CPI-17"/>
    <property type="match status" value="1"/>
</dbReference>
<name>PP14B_HUMAN</name>
<keyword id="KW-0007">Acetylation</keyword>
<keyword id="KW-0175">Coiled coil</keyword>
<keyword id="KW-0963">Cytoplasm</keyword>
<keyword id="KW-0597">Phosphoprotein</keyword>
<keyword id="KW-0650">Protein phosphatase inhibitor</keyword>
<keyword id="KW-1267">Proteomics identification</keyword>
<keyword id="KW-1185">Reference proteome</keyword>
<gene>
    <name type="primary">PPP1R14B</name>
    <name type="synonym">PLCB3N</name>
    <name type="synonym">PNG</name>
</gene>
<sequence>MADSGTAGGAALAAPAPGPGSGGPGPRVYFQSPPGAAGEGPGGADDEGPVRRQGKVTVKYDRKELRKRLNLEEWILEQLTRLYDCQEEEIPELEIDVDELLDMESDDARAARVKELLVDCYKPTEAFISGLLDKIRGMQKLSTPQKK</sequence>
<accession>Q96C90</accession>
<accession>Q504S7</accession>
<accession>Q7KZD7</accession>
<evidence type="ECO:0000250" key="1"/>
<evidence type="ECO:0000250" key="2">
    <source>
        <dbReference type="UniProtKB" id="Q62084"/>
    </source>
</evidence>
<evidence type="ECO:0000255" key="3"/>
<evidence type="ECO:0000256" key="4">
    <source>
        <dbReference type="SAM" id="MobiDB-lite"/>
    </source>
</evidence>
<evidence type="ECO:0000269" key="5">
    <source>
    </source>
</evidence>
<evidence type="ECO:0000305" key="6"/>
<evidence type="ECO:0007744" key="7">
    <source>
    </source>
</evidence>
<evidence type="ECO:0007744" key="8">
    <source>
    </source>
</evidence>
<evidence type="ECO:0007744" key="9">
    <source>
    </source>
</evidence>
<evidence type="ECO:0007744" key="10">
    <source>
    </source>
</evidence>
<evidence type="ECO:0007744" key="11">
    <source>
    </source>
</evidence>
<evidence type="ECO:0007744" key="12">
    <source>
    </source>
</evidence>
<evidence type="ECO:0007744" key="13">
    <source>
    </source>
</evidence>
<organism>
    <name type="scientific">Homo sapiens</name>
    <name type="common">Human</name>
    <dbReference type="NCBI Taxonomy" id="9606"/>
    <lineage>
        <taxon>Eukaryota</taxon>
        <taxon>Metazoa</taxon>
        <taxon>Chordata</taxon>
        <taxon>Craniata</taxon>
        <taxon>Vertebrata</taxon>
        <taxon>Euteleostomi</taxon>
        <taxon>Mammalia</taxon>
        <taxon>Eutheria</taxon>
        <taxon>Euarchontoglires</taxon>
        <taxon>Primates</taxon>
        <taxon>Haplorrhini</taxon>
        <taxon>Catarrhini</taxon>
        <taxon>Hominidae</taxon>
        <taxon>Homo</taxon>
    </lineage>
</organism>